<feature type="chain" id="PRO_0000218956" description="Cytosolic Prostaglandin E synthase">
    <location>
        <begin position="1"/>
        <end position="184"/>
    </location>
</feature>
<feature type="domain" description="CS" evidence="2">
    <location>
        <begin position="7"/>
        <end position="96"/>
    </location>
</feature>
<feature type="region of interest" description="Disordered" evidence="3">
    <location>
        <begin position="115"/>
        <end position="184"/>
    </location>
</feature>
<feature type="compositionally biased region" description="Acidic residues" evidence="3">
    <location>
        <begin position="147"/>
        <end position="158"/>
    </location>
</feature>
<feature type="compositionally biased region" description="Basic and acidic residues" evidence="3">
    <location>
        <begin position="175"/>
        <end position="184"/>
    </location>
</feature>
<feature type="modified residue" description="Phosphoserine" evidence="4 5">
    <location>
        <position position="116"/>
    </location>
</feature>
<feature type="modified residue" description="Phosphoserine" evidence="5">
    <location>
        <position position="127"/>
    </location>
</feature>
<feature type="modified residue" description="Phosphoserine" evidence="5">
    <location>
        <position position="135"/>
    </location>
</feature>
<feature type="modified residue" description="Phosphoserine" evidence="4 5">
    <location>
        <position position="156"/>
    </location>
</feature>
<feature type="modified residue" description="Phosphoserine" evidence="5">
    <location>
        <position position="162"/>
    </location>
</feature>
<feature type="sequence conflict" description="In Ref. 4; ADX35901." evidence="8" ref="4">
    <original>S</original>
    <variation>G</variation>
    <location>
        <position position="72"/>
    </location>
</feature>
<reference key="1">
    <citation type="journal article" date="2000" name="Science">
        <title>The genome sequence of Drosophila melanogaster.</title>
        <authorList>
            <person name="Adams M.D."/>
            <person name="Celniker S.E."/>
            <person name="Holt R.A."/>
            <person name="Evans C.A."/>
            <person name="Gocayne J.D."/>
            <person name="Amanatides P.G."/>
            <person name="Scherer S.E."/>
            <person name="Li P.W."/>
            <person name="Hoskins R.A."/>
            <person name="Galle R.F."/>
            <person name="George R.A."/>
            <person name="Lewis S.E."/>
            <person name="Richards S."/>
            <person name="Ashburner M."/>
            <person name="Henderson S.N."/>
            <person name="Sutton G.G."/>
            <person name="Wortman J.R."/>
            <person name="Yandell M.D."/>
            <person name="Zhang Q."/>
            <person name="Chen L.X."/>
            <person name="Brandon R.C."/>
            <person name="Rogers Y.-H.C."/>
            <person name="Blazej R.G."/>
            <person name="Champe M."/>
            <person name="Pfeiffer B.D."/>
            <person name="Wan K.H."/>
            <person name="Doyle C."/>
            <person name="Baxter E.G."/>
            <person name="Helt G."/>
            <person name="Nelson C.R."/>
            <person name="Miklos G.L.G."/>
            <person name="Abril J.F."/>
            <person name="Agbayani A."/>
            <person name="An H.-J."/>
            <person name="Andrews-Pfannkoch C."/>
            <person name="Baldwin D."/>
            <person name="Ballew R.M."/>
            <person name="Basu A."/>
            <person name="Baxendale J."/>
            <person name="Bayraktaroglu L."/>
            <person name="Beasley E.M."/>
            <person name="Beeson K.Y."/>
            <person name="Benos P.V."/>
            <person name="Berman B.P."/>
            <person name="Bhandari D."/>
            <person name="Bolshakov S."/>
            <person name="Borkova D."/>
            <person name="Botchan M.R."/>
            <person name="Bouck J."/>
            <person name="Brokstein P."/>
            <person name="Brottier P."/>
            <person name="Burtis K.C."/>
            <person name="Busam D.A."/>
            <person name="Butler H."/>
            <person name="Cadieu E."/>
            <person name="Center A."/>
            <person name="Chandra I."/>
            <person name="Cherry J.M."/>
            <person name="Cawley S."/>
            <person name="Dahlke C."/>
            <person name="Davenport L.B."/>
            <person name="Davies P."/>
            <person name="de Pablos B."/>
            <person name="Delcher A."/>
            <person name="Deng Z."/>
            <person name="Mays A.D."/>
            <person name="Dew I."/>
            <person name="Dietz S.M."/>
            <person name="Dodson K."/>
            <person name="Doup L.E."/>
            <person name="Downes M."/>
            <person name="Dugan-Rocha S."/>
            <person name="Dunkov B.C."/>
            <person name="Dunn P."/>
            <person name="Durbin K.J."/>
            <person name="Evangelista C.C."/>
            <person name="Ferraz C."/>
            <person name="Ferriera S."/>
            <person name="Fleischmann W."/>
            <person name="Fosler C."/>
            <person name="Gabrielian A.E."/>
            <person name="Garg N.S."/>
            <person name="Gelbart W.M."/>
            <person name="Glasser K."/>
            <person name="Glodek A."/>
            <person name="Gong F."/>
            <person name="Gorrell J.H."/>
            <person name="Gu Z."/>
            <person name="Guan P."/>
            <person name="Harris M."/>
            <person name="Harris N.L."/>
            <person name="Harvey D.A."/>
            <person name="Heiman T.J."/>
            <person name="Hernandez J.R."/>
            <person name="Houck J."/>
            <person name="Hostin D."/>
            <person name="Houston K.A."/>
            <person name="Howland T.J."/>
            <person name="Wei M.-H."/>
            <person name="Ibegwam C."/>
            <person name="Jalali M."/>
            <person name="Kalush F."/>
            <person name="Karpen G.H."/>
            <person name="Ke Z."/>
            <person name="Kennison J.A."/>
            <person name="Ketchum K.A."/>
            <person name="Kimmel B.E."/>
            <person name="Kodira C.D."/>
            <person name="Kraft C.L."/>
            <person name="Kravitz S."/>
            <person name="Kulp D."/>
            <person name="Lai Z."/>
            <person name="Lasko P."/>
            <person name="Lei Y."/>
            <person name="Levitsky A.A."/>
            <person name="Li J.H."/>
            <person name="Li Z."/>
            <person name="Liang Y."/>
            <person name="Lin X."/>
            <person name="Liu X."/>
            <person name="Mattei B."/>
            <person name="McIntosh T.C."/>
            <person name="McLeod M.P."/>
            <person name="McPherson D."/>
            <person name="Merkulov G."/>
            <person name="Milshina N.V."/>
            <person name="Mobarry C."/>
            <person name="Morris J."/>
            <person name="Moshrefi A."/>
            <person name="Mount S.M."/>
            <person name="Moy M."/>
            <person name="Murphy B."/>
            <person name="Murphy L."/>
            <person name="Muzny D.M."/>
            <person name="Nelson D.L."/>
            <person name="Nelson D.R."/>
            <person name="Nelson K.A."/>
            <person name="Nixon K."/>
            <person name="Nusskern D.R."/>
            <person name="Pacleb J.M."/>
            <person name="Palazzolo M."/>
            <person name="Pittman G.S."/>
            <person name="Pan S."/>
            <person name="Pollard J."/>
            <person name="Puri V."/>
            <person name="Reese M.G."/>
            <person name="Reinert K."/>
            <person name="Remington K."/>
            <person name="Saunders R.D.C."/>
            <person name="Scheeler F."/>
            <person name="Shen H."/>
            <person name="Shue B.C."/>
            <person name="Siden-Kiamos I."/>
            <person name="Simpson M."/>
            <person name="Skupski M.P."/>
            <person name="Smith T.J."/>
            <person name="Spier E."/>
            <person name="Spradling A.C."/>
            <person name="Stapleton M."/>
            <person name="Strong R."/>
            <person name="Sun E."/>
            <person name="Svirskas R."/>
            <person name="Tector C."/>
            <person name="Turner R."/>
            <person name="Venter E."/>
            <person name="Wang A.H."/>
            <person name="Wang X."/>
            <person name="Wang Z.-Y."/>
            <person name="Wassarman D.A."/>
            <person name="Weinstock G.M."/>
            <person name="Weissenbach J."/>
            <person name="Williams S.M."/>
            <person name="Woodage T."/>
            <person name="Worley K.C."/>
            <person name="Wu D."/>
            <person name="Yang S."/>
            <person name="Yao Q.A."/>
            <person name="Ye J."/>
            <person name="Yeh R.-F."/>
            <person name="Zaveri J.S."/>
            <person name="Zhan M."/>
            <person name="Zhang G."/>
            <person name="Zhao Q."/>
            <person name="Zheng L."/>
            <person name="Zheng X.H."/>
            <person name="Zhong F.N."/>
            <person name="Zhong W."/>
            <person name="Zhou X."/>
            <person name="Zhu S.C."/>
            <person name="Zhu X."/>
            <person name="Smith H.O."/>
            <person name="Gibbs R.A."/>
            <person name="Myers E.W."/>
            <person name="Rubin G.M."/>
            <person name="Venter J.C."/>
        </authorList>
    </citation>
    <scope>NUCLEOTIDE SEQUENCE [LARGE SCALE GENOMIC DNA]</scope>
    <source>
        <strain>Berkeley</strain>
    </source>
</reference>
<reference key="2">
    <citation type="journal article" date="2002" name="Genome Biol.">
        <title>Annotation of the Drosophila melanogaster euchromatic genome: a systematic review.</title>
        <authorList>
            <person name="Misra S."/>
            <person name="Crosby M.A."/>
            <person name="Mungall C.J."/>
            <person name="Matthews B.B."/>
            <person name="Campbell K.S."/>
            <person name="Hradecky P."/>
            <person name="Huang Y."/>
            <person name="Kaminker J.S."/>
            <person name="Millburn G.H."/>
            <person name="Prochnik S.E."/>
            <person name="Smith C.D."/>
            <person name="Tupy J.L."/>
            <person name="Whitfield E.J."/>
            <person name="Bayraktaroglu L."/>
            <person name="Berman B.P."/>
            <person name="Bettencourt B.R."/>
            <person name="Celniker S.E."/>
            <person name="de Grey A.D.N.J."/>
            <person name="Drysdale R.A."/>
            <person name="Harris N.L."/>
            <person name="Richter J."/>
            <person name="Russo S."/>
            <person name="Schroeder A.J."/>
            <person name="Shu S.Q."/>
            <person name="Stapleton M."/>
            <person name="Yamada C."/>
            <person name="Ashburner M."/>
            <person name="Gelbart W.M."/>
            <person name="Rubin G.M."/>
            <person name="Lewis S.E."/>
        </authorList>
    </citation>
    <scope>GENOME REANNOTATION</scope>
    <source>
        <strain>Berkeley</strain>
    </source>
</reference>
<reference key="3">
    <citation type="journal article" date="2002" name="Genome Biol.">
        <title>A Drosophila full-length cDNA resource.</title>
        <authorList>
            <person name="Stapleton M."/>
            <person name="Carlson J.W."/>
            <person name="Brokstein P."/>
            <person name="Yu C."/>
            <person name="Champe M."/>
            <person name="George R.A."/>
            <person name="Guarin H."/>
            <person name="Kronmiller B."/>
            <person name="Pacleb J.M."/>
            <person name="Park S."/>
            <person name="Wan K.H."/>
            <person name="Rubin G.M."/>
            <person name="Celniker S.E."/>
        </authorList>
    </citation>
    <scope>NUCLEOTIDE SEQUENCE [LARGE SCALE MRNA]</scope>
    <source>
        <strain>Berkeley</strain>
        <tissue>Embryo</tissue>
    </source>
</reference>
<reference evidence="9" key="4">
    <citation type="submission" date="2011-02" db="EMBL/GenBank/DDBJ databases">
        <authorList>
            <person name="Carlson J."/>
            <person name="Booth B."/>
            <person name="Frise E."/>
            <person name="Sandler J."/>
            <person name="Wan K."/>
            <person name="Yu C."/>
            <person name="Celniker S."/>
        </authorList>
    </citation>
    <scope>NUCLEOTIDE SEQUENCE [LARGE SCALE MRNA]</scope>
</reference>
<reference key="5">
    <citation type="journal article" date="2007" name="Mol. Biosyst.">
        <title>An integrated chemical, mass spectrometric and computational strategy for (quantitative) phosphoproteomics: application to Drosophila melanogaster Kc167 cells.</title>
        <authorList>
            <person name="Bodenmiller B."/>
            <person name="Mueller L.N."/>
            <person name="Pedrioli P.G.A."/>
            <person name="Pflieger D."/>
            <person name="Juenger M.A."/>
            <person name="Eng J.K."/>
            <person name="Aebersold R."/>
            <person name="Tao W.A."/>
        </authorList>
    </citation>
    <scope>PHOSPHORYLATION [LARGE SCALE ANALYSIS] AT SER-116 AND SER-156</scope>
    <scope>IDENTIFICATION BY MASS SPECTROMETRY</scope>
</reference>
<reference key="6">
    <citation type="journal article" date="2008" name="J. Proteome Res.">
        <title>Phosphoproteome analysis of Drosophila melanogaster embryos.</title>
        <authorList>
            <person name="Zhai B."/>
            <person name="Villen J."/>
            <person name="Beausoleil S.A."/>
            <person name="Mintseris J."/>
            <person name="Gygi S.P."/>
        </authorList>
    </citation>
    <scope>PHOSPHORYLATION [LARGE SCALE ANALYSIS] AT SER-116; SER-127; SER-135; SER-156 AND SER-162</scope>
    <scope>IDENTIFICATION BY MASS SPECTROMETRY</scope>
    <source>
        <tissue>Embryo</tissue>
    </source>
</reference>
<reference key="7">
    <citation type="journal article" date="2023" name="Front. Cell Dev. Biol.">
        <title>Specific prostaglandins are produced in the migratory cells and the surrounding substrate to promote Drosophila border cell migration.</title>
        <authorList>
            <person name="Mellentine S.Q."/>
            <person name="Brown H.N."/>
            <person name="Ramsey A.S."/>
            <person name="Li J."/>
            <person name="Tootle T.L."/>
        </authorList>
    </citation>
    <scope>FUNCTION</scope>
    <scope>SUBCELLULAR LOCATION</scope>
    <scope>DEVELOPMENTAL STAGE</scope>
    <scope>DISRUPTION PHENOTYPE</scope>
</reference>
<comment type="function">
    <text evidence="1 6">Cytosolic prostaglandin synthase that catalyzes the oxidoreduction of prostaglandin endoperoxide H2 (PGH2) to prostaglandin E2 (PGE2) (By similarity). Through production of PGE2 may regulate the activity of non-muscle myosin II in an autocrine or paracrine fashion; this may influence border cell and nurse cell stiffness to facilitate border cell migration during oogenesis (PubMed:38283991).</text>
</comment>
<comment type="catalytic activity">
    <reaction evidence="1">
        <text>prostaglandin H2 = prostaglandin E2</text>
        <dbReference type="Rhea" id="RHEA:12893"/>
        <dbReference type="ChEBI" id="CHEBI:57405"/>
        <dbReference type="ChEBI" id="CHEBI:606564"/>
        <dbReference type="EC" id="5.3.99.3"/>
    </reaction>
</comment>
<comment type="subcellular location">
    <subcellularLocation>
        <location evidence="6">Cytoplasm</location>
    </subcellularLocation>
</comment>
<comment type="developmental stage">
    <text evidence="6">Expressed in both germline and somatic cells in the follicle during oogenesis.</text>
</comment>
<comment type="disruption phenotype">
    <text evidence="6">Delayed border cell migration during oogenesis but no defect in border cell cluster cohesion or subcellular localization of integrins (PubMed:38283991). Conditional RNAi-mediated knockdown in oocyte somatic cells has no effect on border cell migration (PubMed:38283991). Conditional RNAi-mediated knockdown in oocyte germline cells delays border cell migration (PubMed:38283991).</text>
</comment>
<comment type="similarity">
    <text evidence="8">Belongs to the p23/wos2 family.</text>
</comment>
<evidence type="ECO:0000250" key="1">
    <source>
        <dbReference type="UniProtKB" id="Q15185"/>
    </source>
</evidence>
<evidence type="ECO:0000255" key="2">
    <source>
        <dbReference type="PROSITE-ProRule" id="PRU00547"/>
    </source>
</evidence>
<evidence type="ECO:0000256" key="3">
    <source>
        <dbReference type="SAM" id="MobiDB-lite"/>
    </source>
</evidence>
<evidence type="ECO:0000269" key="4">
    <source>
    </source>
</evidence>
<evidence type="ECO:0000269" key="5">
    <source>
    </source>
</evidence>
<evidence type="ECO:0000269" key="6">
    <source>
    </source>
</evidence>
<evidence type="ECO:0000303" key="7">
    <source>
    </source>
</evidence>
<evidence type="ECO:0000305" key="8"/>
<evidence type="ECO:0000312" key="9">
    <source>
        <dbReference type="EMBL" id="ADX35901.1"/>
    </source>
</evidence>
<evidence type="ECO:0000312" key="10">
    <source>
        <dbReference type="FlyBase" id="FBgn0037728"/>
    </source>
</evidence>
<evidence type="ECO:0000312" key="11">
    <source>
        <dbReference type="Proteomes" id="UP000000803"/>
    </source>
</evidence>
<name>TEBPH_DROME</name>
<proteinExistence type="evidence at protein level"/>
<accession>Q9VH95</accession>
<accession>A0A0B4K6D2</accession>
<accession>E8NH46</accession>
<protein>
    <recommendedName>
        <fullName evidence="7 10">Cytosolic Prostaglandin E synthase</fullName>
        <ecNumber evidence="1">5.3.99.3</ecNumber>
    </recommendedName>
    <alternativeName>
        <fullName evidence="10">Prostaglandin E synthase 3 homolog</fullName>
    </alternativeName>
</protein>
<sequence length="184" mass="20753">MSAAAGLIPPPVSWAQRNDLIYVIIDVECKDIEHKVTEKTFTFKGVNVLDPSKKYEVTLNFLHEVDPEKVTSKNIGRCLEFTIPKKAAGPYWSSLTTDKTKLHFLKANFAKWRDESDDEEGDQKDNSMFGNFLNSPGGDWNNKFDDFNVDDEEEDSDDNIPSLSQNDEDDEEGGEGDKEKKPAA</sequence>
<keyword id="KW-0963">Cytoplasm</keyword>
<keyword id="KW-0413">Isomerase</keyword>
<keyword id="KW-0597">Phosphoprotein</keyword>
<keyword id="KW-1185">Reference proteome</keyword>
<gene>
    <name evidence="7 10" type="primary">cPges</name>
    <name evidence="10" type="synonym">p23</name>
    <name evidence="10" type="ORF">CG16817</name>
</gene>
<dbReference type="EC" id="5.3.99.3" evidence="1"/>
<dbReference type="EMBL" id="AE014297">
    <property type="protein sequence ID" value="AAF54424.1"/>
    <property type="molecule type" value="Genomic_DNA"/>
</dbReference>
<dbReference type="EMBL" id="AE014297">
    <property type="protein sequence ID" value="AFH06328.1"/>
    <property type="molecule type" value="Genomic_DNA"/>
</dbReference>
<dbReference type="EMBL" id="AY061317">
    <property type="protein sequence ID" value="AAL28865.1"/>
    <property type="molecule type" value="mRNA"/>
</dbReference>
<dbReference type="EMBL" id="BT125922">
    <property type="protein sequence ID" value="ADX35901.1"/>
    <property type="molecule type" value="mRNA"/>
</dbReference>
<dbReference type="RefSeq" id="NP_001247010.1">
    <property type="nucleotide sequence ID" value="NM_001260081.2"/>
</dbReference>
<dbReference type="RefSeq" id="NP_649925.1">
    <property type="nucleotide sequence ID" value="NM_141668.3"/>
</dbReference>
<dbReference type="SMR" id="Q9VH95"/>
<dbReference type="BioGRID" id="66332">
    <property type="interactions" value="73"/>
</dbReference>
<dbReference type="DIP" id="DIP-22478N"/>
<dbReference type="FunCoup" id="Q9VH95">
    <property type="interactions" value="2625"/>
</dbReference>
<dbReference type="IntAct" id="Q9VH95">
    <property type="interactions" value="185"/>
</dbReference>
<dbReference type="STRING" id="7227.FBpp0081560"/>
<dbReference type="iPTMnet" id="Q9VH95"/>
<dbReference type="PaxDb" id="7227-FBpp0081560"/>
<dbReference type="DNASU" id="41173"/>
<dbReference type="EnsemblMetazoa" id="FBtr0082082">
    <property type="protein sequence ID" value="FBpp0081560"/>
    <property type="gene ID" value="FBgn0037728"/>
</dbReference>
<dbReference type="EnsemblMetazoa" id="FBtr0308353">
    <property type="protein sequence ID" value="FBpp0300672"/>
    <property type="gene ID" value="FBgn0037728"/>
</dbReference>
<dbReference type="GeneID" id="41173"/>
<dbReference type="KEGG" id="dme:Dmel_CG16817"/>
<dbReference type="UCSC" id="CG16817-RA">
    <property type="organism name" value="d. melanogaster"/>
</dbReference>
<dbReference type="AGR" id="FB:FBgn0037728"/>
<dbReference type="CTD" id="41173"/>
<dbReference type="FlyBase" id="FBgn0037728">
    <property type="gene designation" value="cPges"/>
</dbReference>
<dbReference type="VEuPathDB" id="VectorBase:FBgn0037728"/>
<dbReference type="eggNOG" id="KOG3158">
    <property type="taxonomic scope" value="Eukaryota"/>
</dbReference>
<dbReference type="GeneTree" id="ENSGT00880000138731"/>
<dbReference type="HOGENOM" id="CLU_078883_0_1_1"/>
<dbReference type="InParanoid" id="Q9VH95"/>
<dbReference type="OMA" id="IEHKVTD"/>
<dbReference type="OrthoDB" id="1564555at2759"/>
<dbReference type="PhylomeDB" id="Q9VH95"/>
<dbReference type="Reactome" id="R-DME-2162123">
    <property type="pathway name" value="Synthesis of Prostaglandins (PG) and Thromboxanes (TX)"/>
</dbReference>
<dbReference type="Reactome" id="R-DME-3371497">
    <property type="pathway name" value="HSP90 chaperone cycle for steroid hormone receptors (SHR) in the presence of ligand"/>
</dbReference>
<dbReference type="Reactome" id="R-DME-3371511">
    <property type="pathway name" value="HSF1 activation"/>
</dbReference>
<dbReference type="Reactome" id="R-DME-3371568">
    <property type="pathway name" value="Attenuation phase"/>
</dbReference>
<dbReference type="Reactome" id="R-DME-8937144">
    <property type="pathway name" value="Aryl hydrocarbon receptor signalling"/>
</dbReference>
<dbReference type="Reactome" id="R-DME-8939211">
    <property type="pathway name" value="ESR-mediated signaling"/>
</dbReference>
<dbReference type="Reactome" id="R-DME-9018519">
    <property type="pathway name" value="Estrogen-dependent gene expression"/>
</dbReference>
<dbReference type="BioGRID-ORCS" id="41173">
    <property type="hits" value="0 hits in 1 CRISPR screen"/>
</dbReference>
<dbReference type="ChiTaRS" id="bai">
    <property type="organism name" value="fly"/>
</dbReference>
<dbReference type="GenomeRNAi" id="41173"/>
<dbReference type="PRO" id="PR:Q9VH95"/>
<dbReference type="Proteomes" id="UP000000803">
    <property type="component" value="Chromosome 3R"/>
</dbReference>
<dbReference type="Bgee" id="FBgn0037728">
    <property type="expression patterns" value="Expressed in spermatocyte in testis and 268 other cell types or tissues"/>
</dbReference>
<dbReference type="ExpressionAtlas" id="Q9VH95">
    <property type="expression patterns" value="baseline and differential"/>
</dbReference>
<dbReference type="GO" id="GO:0005829">
    <property type="term" value="C:cytosol"/>
    <property type="evidence" value="ECO:0000318"/>
    <property type="project" value="GO_Central"/>
</dbReference>
<dbReference type="GO" id="GO:0005783">
    <property type="term" value="C:endoplasmic reticulum"/>
    <property type="evidence" value="ECO:0000314"/>
    <property type="project" value="FlyBase"/>
</dbReference>
<dbReference type="GO" id="GO:0031965">
    <property type="term" value="C:nuclear membrane"/>
    <property type="evidence" value="ECO:0000314"/>
    <property type="project" value="FlyBase"/>
</dbReference>
<dbReference type="GO" id="GO:0005634">
    <property type="term" value="C:nucleus"/>
    <property type="evidence" value="ECO:0000314"/>
    <property type="project" value="FlyBase"/>
</dbReference>
<dbReference type="GO" id="GO:0051879">
    <property type="term" value="F:Hsp90 protein binding"/>
    <property type="evidence" value="ECO:0000318"/>
    <property type="project" value="GO_Central"/>
</dbReference>
<dbReference type="GO" id="GO:0050220">
    <property type="term" value="F:prostaglandin-E synthase activity"/>
    <property type="evidence" value="ECO:0000250"/>
    <property type="project" value="FlyBase"/>
</dbReference>
<dbReference type="GO" id="GO:0051087">
    <property type="term" value="F:protein-folding chaperone binding"/>
    <property type="evidence" value="ECO:0000318"/>
    <property type="project" value="GO_Central"/>
</dbReference>
<dbReference type="GO" id="GO:0051131">
    <property type="term" value="P:chaperone-mediated protein complex assembly"/>
    <property type="evidence" value="ECO:0000318"/>
    <property type="project" value="GO_Central"/>
</dbReference>
<dbReference type="GO" id="GO:0006457">
    <property type="term" value="P:protein folding"/>
    <property type="evidence" value="ECO:0000318"/>
    <property type="project" value="GO_Central"/>
</dbReference>
<dbReference type="GO" id="GO:0070922">
    <property type="term" value="P:RISC complex assembly"/>
    <property type="evidence" value="ECO:0000316"/>
    <property type="project" value="FlyBase"/>
</dbReference>
<dbReference type="CDD" id="cd06465">
    <property type="entry name" value="p23_hB-ind1_like"/>
    <property type="match status" value="1"/>
</dbReference>
<dbReference type="FunFam" id="2.60.40.790:FF:000090">
    <property type="entry name" value="uncharacterized protein CG16817"/>
    <property type="match status" value="1"/>
</dbReference>
<dbReference type="Gene3D" id="2.60.40.790">
    <property type="match status" value="1"/>
</dbReference>
<dbReference type="InterPro" id="IPR007052">
    <property type="entry name" value="CS_dom"/>
</dbReference>
<dbReference type="InterPro" id="IPR008978">
    <property type="entry name" value="HSP20-like_chaperone"/>
</dbReference>
<dbReference type="InterPro" id="IPR045250">
    <property type="entry name" value="p23-like"/>
</dbReference>
<dbReference type="PANTHER" id="PTHR22932:SF1">
    <property type="entry name" value="CO-CHAPERONE PROTEIN DAF-41"/>
    <property type="match status" value="1"/>
</dbReference>
<dbReference type="PANTHER" id="PTHR22932">
    <property type="entry name" value="TELOMERASE-BINDING PROTEIN P23 HSP90 CO-CHAPERONE"/>
    <property type="match status" value="1"/>
</dbReference>
<dbReference type="Pfam" id="PF04969">
    <property type="entry name" value="CS"/>
    <property type="match status" value="1"/>
</dbReference>
<dbReference type="SUPFAM" id="SSF49764">
    <property type="entry name" value="HSP20-like chaperones"/>
    <property type="match status" value="1"/>
</dbReference>
<dbReference type="PROSITE" id="PS51203">
    <property type="entry name" value="CS"/>
    <property type="match status" value="1"/>
</dbReference>
<organism evidence="11">
    <name type="scientific">Drosophila melanogaster</name>
    <name type="common">Fruit fly</name>
    <dbReference type="NCBI Taxonomy" id="7227"/>
    <lineage>
        <taxon>Eukaryota</taxon>
        <taxon>Metazoa</taxon>
        <taxon>Ecdysozoa</taxon>
        <taxon>Arthropoda</taxon>
        <taxon>Hexapoda</taxon>
        <taxon>Insecta</taxon>
        <taxon>Pterygota</taxon>
        <taxon>Neoptera</taxon>
        <taxon>Endopterygota</taxon>
        <taxon>Diptera</taxon>
        <taxon>Brachycera</taxon>
        <taxon>Muscomorpha</taxon>
        <taxon>Ephydroidea</taxon>
        <taxon>Drosophilidae</taxon>
        <taxon>Drosophila</taxon>
        <taxon>Sophophora</taxon>
    </lineage>
</organism>